<dbReference type="EMBL" id="CP000687">
    <property type="protein sequence ID" value="ABY68681.1"/>
    <property type="molecule type" value="Genomic_DNA"/>
</dbReference>
<dbReference type="RefSeq" id="WP_005600053.1">
    <property type="nucleotide sequence ID" value="NC_010278.1"/>
</dbReference>
<dbReference type="SMR" id="B0BRN3"/>
<dbReference type="KEGG" id="apj:APJL_0075"/>
<dbReference type="HOGENOM" id="CLU_140930_0_0_6"/>
<dbReference type="Proteomes" id="UP000008547">
    <property type="component" value="Chromosome"/>
</dbReference>
<dbReference type="GO" id="GO:0043590">
    <property type="term" value="C:bacterial nucleoid"/>
    <property type="evidence" value="ECO:0007669"/>
    <property type="project" value="UniProtKB-UniRule"/>
</dbReference>
<dbReference type="GO" id="GO:0005829">
    <property type="term" value="C:cytosol"/>
    <property type="evidence" value="ECO:0007669"/>
    <property type="project" value="TreeGrafter"/>
</dbReference>
<dbReference type="GO" id="GO:0003677">
    <property type="term" value="F:DNA binding"/>
    <property type="evidence" value="ECO:0007669"/>
    <property type="project" value="UniProtKB-UniRule"/>
</dbReference>
<dbReference type="FunFam" id="3.30.1310.10:FF:000001">
    <property type="entry name" value="Nucleoid-associated protein YbaB"/>
    <property type="match status" value="1"/>
</dbReference>
<dbReference type="Gene3D" id="3.30.1310.10">
    <property type="entry name" value="Nucleoid-associated protein YbaB-like domain"/>
    <property type="match status" value="1"/>
</dbReference>
<dbReference type="HAMAP" id="MF_00274">
    <property type="entry name" value="DNA_YbaB_EbfC"/>
    <property type="match status" value="1"/>
</dbReference>
<dbReference type="InterPro" id="IPR036894">
    <property type="entry name" value="YbaB-like_sf"/>
</dbReference>
<dbReference type="InterPro" id="IPR004401">
    <property type="entry name" value="YbaB/EbfC"/>
</dbReference>
<dbReference type="NCBIfam" id="TIGR00103">
    <property type="entry name" value="DNA_YbaB_EbfC"/>
    <property type="match status" value="1"/>
</dbReference>
<dbReference type="PANTHER" id="PTHR33449">
    <property type="entry name" value="NUCLEOID-ASSOCIATED PROTEIN YBAB"/>
    <property type="match status" value="1"/>
</dbReference>
<dbReference type="PANTHER" id="PTHR33449:SF1">
    <property type="entry name" value="NUCLEOID-ASSOCIATED PROTEIN YBAB"/>
    <property type="match status" value="1"/>
</dbReference>
<dbReference type="Pfam" id="PF02575">
    <property type="entry name" value="YbaB_DNA_bd"/>
    <property type="match status" value="1"/>
</dbReference>
<dbReference type="PIRSF" id="PIRSF004555">
    <property type="entry name" value="UCP004555"/>
    <property type="match status" value="1"/>
</dbReference>
<dbReference type="SUPFAM" id="SSF82607">
    <property type="entry name" value="YbaB-like"/>
    <property type="match status" value="1"/>
</dbReference>
<proteinExistence type="inferred from homology"/>
<sequence>MFGKGGLGGLMKQAQQMQERMQKMQEEIAQLEVTGESGAGLVKVTINGAHNCRRIEIDPSLMEDDKEMVEDLVAAAFNDAVRRAEEMQKEKMASVTAGMQLPPGMKFPF</sequence>
<name>Y075_ACTPJ</name>
<comment type="function">
    <text evidence="1">Binds to DNA and alters its conformation. May be involved in regulation of gene expression, nucleoid organization and DNA protection.</text>
</comment>
<comment type="subunit">
    <text evidence="1">Homodimer.</text>
</comment>
<comment type="subcellular location">
    <subcellularLocation>
        <location evidence="1">Cytoplasm</location>
        <location evidence="1">Nucleoid</location>
    </subcellularLocation>
</comment>
<comment type="similarity">
    <text evidence="1">Belongs to the YbaB/EbfC family.</text>
</comment>
<reference key="1">
    <citation type="journal article" date="2008" name="PLoS ONE">
        <title>Genome biology of Actinobacillus pleuropneumoniae JL03, an isolate of serotype 3 prevalent in China.</title>
        <authorList>
            <person name="Xu Z."/>
            <person name="Zhou Y."/>
            <person name="Li L."/>
            <person name="Zhou R."/>
            <person name="Xiao S."/>
            <person name="Wan Y."/>
            <person name="Zhang S."/>
            <person name="Wang K."/>
            <person name="Li W."/>
            <person name="Li L."/>
            <person name="Jin H."/>
            <person name="Kang M."/>
            <person name="Dalai B."/>
            <person name="Li T."/>
            <person name="Liu L."/>
            <person name="Cheng Y."/>
            <person name="Zhang L."/>
            <person name="Xu T."/>
            <person name="Zheng H."/>
            <person name="Pu S."/>
            <person name="Wang B."/>
            <person name="Gu W."/>
            <person name="Zhang X.L."/>
            <person name="Zhu G.-F."/>
            <person name="Wang S."/>
            <person name="Zhao G.-P."/>
            <person name="Chen H."/>
        </authorList>
    </citation>
    <scope>NUCLEOTIDE SEQUENCE [LARGE SCALE GENOMIC DNA]</scope>
    <source>
        <strain>JL03</strain>
    </source>
</reference>
<feature type="chain" id="PRO_1000114577" description="Nucleoid-associated protein APJL_0075">
    <location>
        <begin position="1"/>
        <end position="109"/>
    </location>
</feature>
<feature type="region of interest" description="Disordered" evidence="2">
    <location>
        <begin position="1"/>
        <end position="21"/>
    </location>
</feature>
<feature type="compositionally biased region" description="Low complexity" evidence="2">
    <location>
        <begin position="10"/>
        <end position="19"/>
    </location>
</feature>
<protein>
    <recommendedName>
        <fullName evidence="1">Nucleoid-associated protein APJL_0075</fullName>
    </recommendedName>
</protein>
<organism>
    <name type="scientific">Actinobacillus pleuropneumoniae serotype 3 (strain JL03)</name>
    <dbReference type="NCBI Taxonomy" id="434271"/>
    <lineage>
        <taxon>Bacteria</taxon>
        <taxon>Pseudomonadati</taxon>
        <taxon>Pseudomonadota</taxon>
        <taxon>Gammaproteobacteria</taxon>
        <taxon>Pasteurellales</taxon>
        <taxon>Pasteurellaceae</taxon>
        <taxon>Actinobacillus</taxon>
    </lineage>
</organism>
<accession>B0BRN3</accession>
<gene>
    <name type="ordered locus">APJL_0075</name>
</gene>
<evidence type="ECO:0000255" key="1">
    <source>
        <dbReference type="HAMAP-Rule" id="MF_00274"/>
    </source>
</evidence>
<evidence type="ECO:0000256" key="2">
    <source>
        <dbReference type="SAM" id="MobiDB-lite"/>
    </source>
</evidence>
<keyword id="KW-0963">Cytoplasm</keyword>
<keyword id="KW-0238">DNA-binding</keyword>